<proteinExistence type="evidence at protein level"/>
<feature type="signal peptide" evidence="2">
    <location>
        <begin position="1"/>
        <end position="35"/>
    </location>
</feature>
<feature type="chain" id="PRO_0000280235" description="Serine-aspartate repeat-containing protein D">
    <location>
        <begin position="36"/>
        <end position="1281"/>
    </location>
</feature>
<feature type="propeptide" id="PRO_0000280236" description="Removed by sortase" evidence="3 7">
    <location>
        <begin position="1282"/>
        <end position="1315"/>
    </location>
</feature>
<feature type="domain" description="CNA-B 1">
    <location>
        <begin position="569"/>
        <end position="680"/>
    </location>
</feature>
<feature type="domain" description="CNA-B 2">
    <location>
        <begin position="681"/>
        <end position="791"/>
    </location>
</feature>
<feature type="domain" description="CNA-B 3">
    <location>
        <begin position="792"/>
        <end position="901"/>
    </location>
</feature>
<feature type="domain" description="CNA-B 4">
    <location>
        <begin position="902"/>
        <end position="1012"/>
    </location>
</feature>
<feature type="domain" description="CNA-B 5">
    <location>
        <begin position="1013"/>
        <end position="1123"/>
    </location>
</feature>
<feature type="region of interest" description="Ligand binding A region">
    <location>
        <begin position="36"/>
        <end position="568"/>
    </location>
</feature>
<feature type="region of interest" description="Disordered" evidence="4">
    <location>
        <begin position="54"/>
        <end position="185"/>
    </location>
</feature>
<feature type="region of interest" description="Disordered" evidence="4">
    <location>
        <begin position="857"/>
        <end position="883"/>
    </location>
</feature>
<feature type="region of interest" description="Disordered" evidence="4">
    <location>
        <begin position="972"/>
        <end position="992"/>
    </location>
</feature>
<feature type="region of interest" description="Disordered" evidence="4">
    <location>
        <begin position="1078"/>
        <end position="1291"/>
    </location>
</feature>
<feature type="short sequence motif" description="YSIRK-G/S signaling motif" evidence="1">
    <location>
        <begin position="23"/>
        <end position="34"/>
    </location>
</feature>
<feature type="short sequence motif" description="LPXTG sorting signal" evidence="3">
    <location>
        <begin position="1278"/>
        <end position="1282"/>
    </location>
</feature>
<feature type="compositionally biased region" description="Polar residues" evidence="4">
    <location>
        <begin position="62"/>
        <end position="71"/>
    </location>
</feature>
<feature type="compositionally biased region" description="Polar residues" evidence="4">
    <location>
        <begin position="94"/>
        <end position="108"/>
    </location>
</feature>
<feature type="compositionally biased region" description="Basic and acidic residues" evidence="4">
    <location>
        <begin position="130"/>
        <end position="145"/>
    </location>
</feature>
<feature type="compositionally biased region" description="Polar residues" evidence="4">
    <location>
        <begin position="146"/>
        <end position="155"/>
    </location>
</feature>
<feature type="compositionally biased region" description="Polar residues" evidence="4">
    <location>
        <begin position="163"/>
        <end position="173"/>
    </location>
</feature>
<feature type="compositionally biased region" description="Basic and acidic residues" evidence="4">
    <location>
        <begin position="174"/>
        <end position="183"/>
    </location>
</feature>
<feature type="compositionally biased region" description="Polar residues" evidence="4">
    <location>
        <begin position="860"/>
        <end position="869"/>
    </location>
</feature>
<feature type="compositionally biased region" description="Polar residues" evidence="4">
    <location>
        <begin position="972"/>
        <end position="981"/>
    </location>
</feature>
<feature type="compositionally biased region" description="Acidic residues" evidence="4">
    <location>
        <begin position="1091"/>
        <end position="1101"/>
    </location>
</feature>
<feature type="compositionally biased region" description="Acidic residues" evidence="4">
    <location>
        <begin position="1118"/>
        <end position="1134"/>
    </location>
</feature>
<feature type="compositionally biased region" description="Acidic residues" evidence="4">
    <location>
        <begin position="1142"/>
        <end position="1164"/>
    </location>
</feature>
<feature type="compositionally biased region" description="Acidic residues" evidence="4">
    <location>
        <begin position="1172"/>
        <end position="1254"/>
    </location>
</feature>
<feature type="modified residue" description="Pentaglycyl murein peptidoglycan amidated threonine" evidence="3">
    <location>
        <position position="1281"/>
    </location>
</feature>
<sequence length="1315" mass="142776">MLNRENKTAITRKGMVSNRLNKFSIRKYTVGTASILVGTTLIFGLGNQEAKAAESTNKELNEATTSASDNQSSDKVDMQQLNQEDNTKNDNQKEMVSSQGNETTSNGNKLIEKESVQSTTGNKVEVSTAKSDEQASPKSTNEDLNTKQTISNQEALQPDLQENKSVVNVQPTNEENKKVDAKTESTTLNVKSDAIKSNDETLVDNNSNSNNENNADIILPKSTAPKRLNTRMRIAAVQPSSTEAKNVNDLITSNTTLTVVDADKNNKIVPAQDYLSLKSQITVDDKVKSGDYFTIKYSDTVQVYGLNPEDIKNIGDIKDPNNGETIATAKHDTANNLITYTFTDYVDRFNSVQMGINYSIYMDADTIPVSKNDVEFNVTIGNTTTKTTANIQYPDYVVNEKNSIGSAFTETVSHVGNKENPGYYKQTIYVNPSENSLTNAKLKVQAYHSSYPNNIGQINKDVTDIKIYQVPKGYTLNKGYDVNTKELTDVTNQYLQKITYGDNNSAVIDFGNADSAYVVMVNTKFQYTNSESPTLVQMATLSSTGNKSVSTGNALGFTNNQSGGAGQEVYKIGNYVWEDTNKNGVQELGEKGVGNVTVTVFDNNTNTKVGEAVTKEDGSYLIPNLPNGDYRVEFSNLPKGYEVTPSKQGNNEELDSNGLSSVITVNGKDNLSADLGIYKPKYNLGDYVWEDTNKNGIQDQDEKGISGVTVTLKDENGNVLKTVTTDADGKYKFTDLDNGNYKVEFTTPEGYTPTTVTSGSDIEKDSNGLTTTGVINGADNMTLDSGFYKTPKYNLGNYVWEDTNKDGKQDSTEKGISGVTVTLKNENGEVLQTTKTDKDGKYQFTGLENGTYKVEFETPSGYTPTQVGSGTDEGIDSNGTSTTGVIKDKDNDTIDSGFYKPTYNLGDYVWEDTNKNGVQDKDEKGISGVTVTLKDENDKVLKTVTTDENGKYQFTDLNNGTYKVEFETPSGYTPTSVTSGNDTEKDSNGLTTTGVIKDADNMTLDSGFYKTPKYSLGDYVWYDSNKDGKQDSTEKGIKDVKVTLLNEKGEVIGTTKTDENGKYCFDNLDSGKYKVIFEKPAGLTQTGTNTTEDDKDADGGEVDVTITDHDDFTLDNGYYEEETSDSDSDSDSDSDSDRDSDSDSDSDSDSDSDSDSDSDSDSDSDSDRDSDSDSDSDSDSDSDSDSDSDSDSDSDSDSDSDSDSDSDSDSDSDSDSDSDSDSDSDSDSDSDSDSDSDSDSDSDSDSDSDSDSDSDAGKHTPVKPMSTTKDHHNKAKALPETGNENSGSNNATLFGGLFAALGSLLLFGRRKKQNK</sequence>
<reference key="1">
    <citation type="journal article" date="1998" name="Microbiology">
        <title>Three new members of the serine-aspartate repeat protein multigene family of Staphylococcus aureus.</title>
        <authorList>
            <person name="Josefsson E."/>
            <person name="McCrea K.W."/>
            <person name="Eidhin D.N."/>
            <person name="O'Connell D."/>
            <person name="Cox J.A."/>
            <person name="Hoeoek M."/>
            <person name="Foster T.J."/>
        </authorList>
    </citation>
    <scope>NUCLEOTIDE SEQUENCE [GENOMIC DNA]</scope>
    <scope>FUNCTION</scope>
</reference>
<reference key="2">
    <citation type="journal article" date="2008" name="J. Bacteriol.">
        <title>Genome sequence of Staphylococcus aureus strain Newman and comparative analysis of staphylococcal genomes: polymorphism and evolution of two major pathogenicity islands.</title>
        <authorList>
            <person name="Baba T."/>
            <person name="Bae T."/>
            <person name="Schneewind O."/>
            <person name="Takeuchi F."/>
            <person name="Hiramatsu K."/>
        </authorList>
    </citation>
    <scope>NUCLEOTIDE SEQUENCE [LARGE SCALE GENOMIC DNA]</scope>
    <source>
        <strain>Newman</strain>
    </source>
</reference>
<reference key="3">
    <citation type="journal article" date="1998" name="J. Biol. Chem.">
        <title>The binding of calcium to the B-repeat segment of sdrD, a cell surface protein of Staphylococcus aureus.</title>
        <authorList>
            <person name="Josefsson E."/>
            <person name="O'Connell D."/>
            <person name="Foster T.J."/>
            <person name="Durussel I."/>
            <person name="Cox J.A."/>
        </authorList>
    </citation>
    <scope>CALCIUM-BINDING</scope>
</reference>
<reference key="4">
    <citation type="journal article" date="2002" name="Proc. Natl. Acad. Sci. U.S.A.">
        <title>An iron-regulated sortase anchors a class of surface protein during Staphylococcus aureus pathogenesis.</title>
        <authorList>
            <person name="Mazmanian S.K."/>
            <person name="Ton-That H."/>
            <person name="Su K."/>
            <person name="Schneewind O."/>
        </authorList>
    </citation>
    <scope>SUBCELLULAR LOCATION</scope>
    <scope>PROCESSING BY SORTASE A</scope>
    <source>
        <strain>Newman</strain>
    </source>
</reference>
<reference key="5">
    <citation type="journal article" date="2006" name="Proc. Natl. Acad. Sci. U.S.A.">
        <title>Vaccine assembly from surface proteins of Staphylococcus aureus.</title>
        <authorList>
            <person name="Stranger-Jones Y.K."/>
            <person name="Bae T."/>
            <person name="Schneewind O."/>
        </authorList>
    </citation>
    <scope>POTENTIAL USE AS A VACCINE</scope>
</reference>
<evidence type="ECO:0000250" key="1">
    <source>
        <dbReference type="UniProtKB" id="Q2G0L4"/>
    </source>
</evidence>
<evidence type="ECO:0000255" key="2"/>
<evidence type="ECO:0000255" key="3">
    <source>
        <dbReference type="PROSITE-ProRule" id="PRU00477"/>
    </source>
</evidence>
<evidence type="ECO:0000256" key="4">
    <source>
        <dbReference type="SAM" id="MobiDB-lite"/>
    </source>
</evidence>
<evidence type="ECO:0000269" key="5">
    <source>
    </source>
</evidence>
<evidence type="ECO:0000305" key="6"/>
<evidence type="ECO:0000305" key="7">
    <source>
    </source>
</evidence>
<protein>
    <recommendedName>
        <fullName>Serine-aspartate repeat-containing protein D</fullName>
    </recommendedName>
</protein>
<keyword id="KW-0106">Calcium</keyword>
<keyword id="KW-0134">Cell wall</keyword>
<keyword id="KW-0572">Peptidoglycan-anchor</keyword>
<keyword id="KW-0677">Repeat</keyword>
<keyword id="KW-0964">Secreted</keyword>
<keyword id="KW-0732">Signal</keyword>
<organism>
    <name type="scientific">Staphylococcus aureus (strain Newman)</name>
    <dbReference type="NCBI Taxonomy" id="426430"/>
    <lineage>
        <taxon>Bacteria</taxon>
        <taxon>Bacillati</taxon>
        <taxon>Bacillota</taxon>
        <taxon>Bacilli</taxon>
        <taxon>Bacillales</taxon>
        <taxon>Staphylococcaceae</taxon>
        <taxon>Staphylococcus</taxon>
    </lineage>
</organism>
<name>SDRD_STAAE</name>
<dbReference type="EMBL" id="AJ005646">
    <property type="protein sequence ID" value="CAA06651.1"/>
    <property type="molecule type" value="Genomic_DNA"/>
</dbReference>
<dbReference type="EMBL" id="AP009351">
    <property type="protein sequence ID" value="BAF66796.1"/>
    <property type="molecule type" value="Genomic_DNA"/>
</dbReference>
<dbReference type="PIR" id="T28679">
    <property type="entry name" value="T28679"/>
</dbReference>
<dbReference type="RefSeq" id="WP_000934419.1">
    <property type="nucleotide sequence ID" value="NZ_JBBIAE010000002.1"/>
</dbReference>
<dbReference type="SMR" id="O86488"/>
<dbReference type="KEGG" id="sae:NWMN_0524"/>
<dbReference type="HOGENOM" id="CLU_004137_0_1_9"/>
<dbReference type="PRO" id="PR:O86488"/>
<dbReference type="Proteomes" id="UP000006386">
    <property type="component" value="Chromosome"/>
</dbReference>
<dbReference type="GO" id="GO:0005576">
    <property type="term" value="C:extracellular region"/>
    <property type="evidence" value="ECO:0007669"/>
    <property type="project" value="UniProtKB-KW"/>
</dbReference>
<dbReference type="GO" id="GO:0007155">
    <property type="term" value="P:cell adhesion"/>
    <property type="evidence" value="ECO:0007669"/>
    <property type="project" value="InterPro"/>
</dbReference>
<dbReference type="DisProt" id="DP00065"/>
<dbReference type="Gene3D" id="2.60.40.1280">
    <property type="match status" value="1"/>
</dbReference>
<dbReference type="Gene3D" id="2.60.40.1290">
    <property type="match status" value="1"/>
</dbReference>
<dbReference type="Gene3D" id="2.60.40.10">
    <property type="entry name" value="Immunoglobulins"/>
    <property type="match status" value="5"/>
</dbReference>
<dbReference type="InterPro" id="IPR011266">
    <property type="entry name" value="Adhesin_Fg-bd_dom_2"/>
</dbReference>
<dbReference type="InterPro" id="IPR008966">
    <property type="entry name" value="Adhesion_dom_sf"/>
</dbReference>
<dbReference type="InterPro" id="IPR011252">
    <property type="entry name" value="Fibrogen-bd_dom1"/>
</dbReference>
<dbReference type="InterPro" id="IPR013783">
    <property type="entry name" value="Ig-like_fold"/>
</dbReference>
<dbReference type="InterPro" id="IPR019931">
    <property type="entry name" value="LPXTG_anchor"/>
</dbReference>
<dbReference type="InterPro" id="IPR051417">
    <property type="entry name" value="SDr/BOS_complex"/>
</dbReference>
<dbReference type="InterPro" id="IPR033764">
    <property type="entry name" value="Sdr_B"/>
</dbReference>
<dbReference type="InterPro" id="IPR041171">
    <property type="entry name" value="SDR_Ig"/>
</dbReference>
<dbReference type="InterPro" id="IPR005877">
    <property type="entry name" value="YSIRK_signal_dom"/>
</dbReference>
<dbReference type="NCBIfam" id="TIGR01167">
    <property type="entry name" value="LPXTG_anchor"/>
    <property type="match status" value="1"/>
</dbReference>
<dbReference type="NCBIfam" id="NF012181">
    <property type="entry name" value="MSCRAMM_SdrD"/>
    <property type="match status" value="1"/>
</dbReference>
<dbReference type="NCBIfam" id="TIGR01168">
    <property type="entry name" value="YSIRK_signal"/>
    <property type="match status" value="1"/>
</dbReference>
<dbReference type="PANTHER" id="PTHR23303">
    <property type="entry name" value="CARBOXYPEPTIDASE REGULATORY REGION-CONTAINING"/>
    <property type="match status" value="1"/>
</dbReference>
<dbReference type="PANTHER" id="PTHR23303:SF15">
    <property type="entry name" value="COLOSSIN-A"/>
    <property type="match status" value="1"/>
</dbReference>
<dbReference type="Pfam" id="PF17961">
    <property type="entry name" value="Big_8"/>
    <property type="match status" value="1"/>
</dbReference>
<dbReference type="Pfam" id="PF00746">
    <property type="entry name" value="Gram_pos_anchor"/>
    <property type="match status" value="1"/>
</dbReference>
<dbReference type="Pfam" id="PF17210">
    <property type="entry name" value="SdrD_B"/>
    <property type="match status" value="5"/>
</dbReference>
<dbReference type="Pfam" id="PF10425">
    <property type="entry name" value="SdrG_C_C"/>
    <property type="match status" value="1"/>
</dbReference>
<dbReference type="Pfam" id="PF04650">
    <property type="entry name" value="YSIRK_signal"/>
    <property type="match status" value="1"/>
</dbReference>
<dbReference type="SUPFAM" id="SSF49401">
    <property type="entry name" value="Bacterial adhesins"/>
    <property type="match status" value="2"/>
</dbReference>
<dbReference type="SUPFAM" id="SSF117074">
    <property type="entry name" value="Hypothetical protein PA1324"/>
    <property type="match status" value="5"/>
</dbReference>
<dbReference type="PROSITE" id="PS50847">
    <property type="entry name" value="GRAM_POS_ANCHORING"/>
    <property type="match status" value="1"/>
</dbReference>
<gene>
    <name type="primary">sdrD</name>
    <name type="ordered locus">NWMN_0524</name>
</gene>
<accession>O86488</accession>
<accession>A6QEL4</accession>
<comment type="function">
    <text evidence="1 5">Cell surface-associated calcium-binding protein which plays an important role in adhesion and pathogenesis (PubMed:9884231). Mediates interactions with components of the extracellular matrix such as host DSG1 to promote bacterial adhesion to host cells. Contributes to the resistance to killing by innate immune components such as neutrophils present in blood and thus attenuates bacterial clearance (By similarity).</text>
</comment>
<comment type="subunit">
    <text evidence="1">Interacts with host DSG1; this interaction increases S.aureus adherence to keratinocytes.</text>
</comment>
<comment type="subcellular location">
    <subcellularLocation>
        <location evidence="3 7">Secreted</location>
        <location evidence="3 7">Cell wall</location>
        <topology evidence="3 7">Peptidoglycan-anchor</topology>
    </subcellularLocation>
    <text evidence="7">Anchored to the cell wall by sortase A.</text>
</comment>
<comment type="PTM">
    <text evidence="7">Anchored to the cell wall by sortase A.</text>
</comment>
<comment type="biotechnology">
    <text>A combined vaccine containing IsdA, IsdB, SdrD and SdrE afforded significant protection in mice against a lethal challenge with S.aureus Newman or any of the clinical isolates NRS252, N315, NRS248, USA100 and USA400. The immune response elicited by the combined vaccine is greater than the one elicited by its individual components.</text>
</comment>
<comment type="similarity">
    <text evidence="6">Belongs to the serine-aspartate repeat-containing protein (SDr) family.</text>
</comment>